<organism>
    <name type="scientific">Staphylococcus aureus (strain JH1)</name>
    <dbReference type="NCBI Taxonomy" id="359787"/>
    <lineage>
        <taxon>Bacteria</taxon>
        <taxon>Bacillati</taxon>
        <taxon>Bacillota</taxon>
        <taxon>Bacilli</taxon>
        <taxon>Bacillales</taxon>
        <taxon>Staphylococcaceae</taxon>
        <taxon>Staphylococcus</taxon>
    </lineage>
</organism>
<accession>A6U1Z6</accession>
<reference key="1">
    <citation type="submission" date="2007-06" db="EMBL/GenBank/DDBJ databases">
        <title>Complete sequence of chromosome of Staphylococcus aureus subsp. aureus JH1.</title>
        <authorList>
            <consortium name="US DOE Joint Genome Institute"/>
            <person name="Copeland A."/>
            <person name="Lucas S."/>
            <person name="Lapidus A."/>
            <person name="Barry K."/>
            <person name="Detter J.C."/>
            <person name="Glavina del Rio T."/>
            <person name="Hammon N."/>
            <person name="Israni S."/>
            <person name="Dalin E."/>
            <person name="Tice H."/>
            <person name="Pitluck S."/>
            <person name="Chain P."/>
            <person name="Malfatti S."/>
            <person name="Shin M."/>
            <person name="Vergez L."/>
            <person name="Schmutz J."/>
            <person name="Larimer F."/>
            <person name="Land M."/>
            <person name="Hauser L."/>
            <person name="Kyrpides N."/>
            <person name="Ivanova N."/>
            <person name="Tomasz A."/>
            <person name="Richardson P."/>
        </authorList>
    </citation>
    <scope>NUCLEOTIDE SEQUENCE [LARGE SCALE GENOMIC DNA]</scope>
    <source>
        <strain>JH1</strain>
    </source>
</reference>
<evidence type="ECO:0000255" key="1">
    <source>
        <dbReference type="HAMAP-Rule" id="MF_00073"/>
    </source>
</evidence>
<feature type="chain" id="PRO_1000075208" description="Transcription antitermination protein NusB">
    <location>
        <begin position="1"/>
        <end position="129"/>
    </location>
</feature>
<sequence>MSRKESRVQAFQTLFQLEMKDSDLTINEAISFIKDDNPDLDFEFIHWLVSGVKDHEPVLDETISPYLKDWTIARLLKTDRIILRMATYEILHSDTPAKVVMNEAVELTKQFSDDDHYKFINGVLSNIKK</sequence>
<keyword id="KW-0694">RNA-binding</keyword>
<keyword id="KW-0804">Transcription</keyword>
<keyword id="KW-0889">Transcription antitermination</keyword>
<keyword id="KW-0805">Transcription regulation</keyword>
<dbReference type="EMBL" id="CP000736">
    <property type="protein sequence ID" value="ABR52464.1"/>
    <property type="molecule type" value="Genomic_DNA"/>
</dbReference>
<dbReference type="SMR" id="A6U1Z6"/>
<dbReference type="KEGG" id="sah:SaurJH1_1616"/>
<dbReference type="HOGENOM" id="CLU_087843_3_3_9"/>
<dbReference type="GO" id="GO:0005829">
    <property type="term" value="C:cytosol"/>
    <property type="evidence" value="ECO:0007669"/>
    <property type="project" value="TreeGrafter"/>
</dbReference>
<dbReference type="GO" id="GO:0003723">
    <property type="term" value="F:RNA binding"/>
    <property type="evidence" value="ECO:0007669"/>
    <property type="project" value="UniProtKB-UniRule"/>
</dbReference>
<dbReference type="GO" id="GO:0006353">
    <property type="term" value="P:DNA-templated transcription termination"/>
    <property type="evidence" value="ECO:0007669"/>
    <property type="project" value="UniProtKB-UniRule"/>
</dbReference>
<dbReference type="GO" id="GO:0031564">
    <property type="term" value="P:transcription antitermination"/>
    <property type="evidence" value="ECO:0007669"/>
    <property type="project" value="UniProtKB-KW"/>
</dbReference>
<dbReference type="FunFam" id="1.10.940.10:FF:000011">
    <property type="entry name" value="Transcription antitermination protein NusB"/>
    <property type="match status" value="1"/>
</dbReference>
<dbReference type="Gene3D" id="1.10.940.10">
    <property type="entry name" value="NusB-like"/>
    <property type="match status" value="1"/>
</dbReference>
<dbReference type="HAMAP" id="MF_00073">
    <property type="entry name" value="NusB"/>
    <property type="match status" value="1"/>
</dbReference>
<dbReference type="InterPro" id="IPR035926">
    <property type="entry name" value="NusB-like_sf"/>
</dbReference>
<dbReference type="InterPro" id="IPR011605">
    <property type="entry name" value="NusB_fam"/>
</dbReference>
<dbReference type="InterPro" id="IPR006027">
    <property type="entry name" value="NusB_RsmB_TIM44"/>
</dbReference>
<dbReference type="NCBIfam" id="TIGR01951">
    <property type="entry name" value="nusB"/>
    <property type="match status" value="1"/>
</dbReference>
<dbReference type="PANTHER" id="PTHR11078:SF3">
    <property type="entry name" value="ANTITERMINATION NUSB DOMAIN-CONTAINING PROTEIN"/>
    <property type="match status" value="1"/>
</dbReference>
<dbReference type="PANTHER" id="PTHR11078">
    <property type="entry name" value="N UTILIZATION SUBSTANCE PROTEIN B-RELATED"/>
    <property type="match status" value="1"/>
</dbReference>
<dbReference type="Pfam" id="PF01029">
    <property type="entry name" value="NusB"/>
    <property type="match status" value="1"/>
</dbReference>
<dbReference type="SUPFAM" id="SSF48013">
    <property type="entry name" value="NusB-like"/>
    <property type="match status" value="1"/>
</dbReference>
<proteinExistence type="inferred from homology"/>
<comment type="function">
    <text evidence="1">Involved in transcription antitermination. Required for transcription of ribosomal RNA (rRNA) genes. Binds specifically to the boxA antiterminator sequence of the ribosomal RNA (rrn) operons.</text>
</comment>
<comment type="similarity">
    <text evidence="1">Belongs to the NusB family.</text>
</comment>
<name>NUSB_STAA2</name>
<protein>
    <recommendedName>
        <fullName evidence="1">Transcription antitermination protein NusB</fullName>
    </recommendedName>
    <alternativeName>
        <fullName evidence="1">Antitermination factor NusB</fullName>
    </alternativeName>
</protein>
<gene>
    <name evidence="1" type="primary">nusB</name>
    <name type="ordered locus">SaurJH1_1616</name>
</gene>